<sequence>MASTFIPGLNPQNPHYIPGYTGHCPLLRFSMGQTYGQMTGQLLRGSPGLAWPPAHRTLLPPIQPPRSPEPRRRSLPVRPGHERLSSSMVPGYTGFVPQAQFIFAKNCSQVWAEALNGFTQRNGGQGSQELPKEAKGEKDVEKDQEPKPEVEKEPELGQEAEQASPYSMDDRDPRKFFMSGFTGYVPRARFLFGSSFPVLSNQALQEFGEMKSPGRSQKDPKHLPALSRTYPQHLGLLPKYGGYVPGYKFQFGRTYGHLTQDALGLSTLQKQLLV</sequence>
<keyword id="KW-0002">3D-structure</keyword>
<keyword id="KW-0966">Cell projection</keyword>
<keyword id="KW-0969">Cilium</keyword>
<keyword id="KW-0963">Cytoplasm</keyword>
<keyword id="KW-0206">Cytoskeleton</keyword>
<keyword id="KW-0282">Flagellum</keyword>
<keyword id="KW-1185">Reference proteome</keyword>
<name>CMI2B_BOVIN</name>
<gene>
    <name type="primary">CIMIP2B</name>
    <name type="synonym">FAM166B</name>
</gene>
<protein>
    <recommendedName>
        <fullName>Ciliary microtubule inner protein 2B</fullName>
    </recommendedName>
</protein>
<feature type="chain" id="PRO_0000342382" description="Ciliary microtubule inner protein 2B">
    <location>
        <begin position="1"/>
        <end position="274"/>
    </location>
</feature>
<feature type="region of interest" description="Disordered" evidence="2">
    <location>
        <begin position="46"/>
        <end position="89"/>
    </location>
</feature>
<feature type="region of interest" description="Disordered" evidence="2">
    <location>
        <begin position="119"/>
        <end position="171"/>
    </location>
</feature>
<feature type="compositionally biased region" description="Basic and acidic residues" evidence="2">
    <location>
        <begin position="130"/>
        <end position="155"/>
    </location>
</feature>
<evidence type="ECO:0000250" key="1">
    <source>
        <dbReference type="UniProtKB" id="A2AIP0"/>
    </source>
</evidence>
<evidence type="ECO:0000256" key="2">
    <source>
        <dbReference type="SAM" id="MobiDB-lite"/>
    </source>
</evidence>
<evidence type="ECO:0000269" key="3">
    <source>
    </source>
</evidence>
<evidence type="ECO:0000305" key="4"/>
<evidence type="ECO:0007744" key="5">
    <source>
        <dbReference type="PDB" id="7RRO"/>
    </source>
</evidence>
<proteinExistence type="evidence at protein level"/>
<dbReference type="EMBL" id="BC109759">
    <property type="protein sequence ID" value="AAI09760.1"/>
    <property type="molecule type" value="mRNA"/>
</dbReference>
<dbReference type="RefSeq" id="NP_001033602.1">
    <property type="nucleotide sequence ID" value="NM_001038513.2"/>
</dbReference>
<dbReference type="PDB" id="7RRO">
    <property type="method" value="EM"/>
    <property type="resolution" value="3.40 A"/>
    <property type="chains" value="H/I/J/K/L/M/N=1-274"/>
</dbReference>
<dbReference type="PDB" id="9CPB">
    <property type="method" value="EM"/>
    <property type="resolution" value="3.52 A"/>
    <property type="chains" value="3X/3Y/3Z/4A/4B/4C=1-274"/>
</dbReference>
<dbReference type="PDBsum" id="7RRO"/>
<dbReference type="PDBsum" id="9CPB"/>
<dbReference type="EMDB" id="EMD-24664"/>
<dbReference type="EMDB" id="EMD-45801"/>
<dbReference type="SMR" id="Q2TBR5"/>
<dbReference type="FunCoup" id="Q2TBR5">
    <property type="interactions" value="103"/>
</dbReference>
<dbReference type="STRING" id="9913.ENSBTAP00000043432"/>
<dbReference type="PaxDb" id="9913-ENSBTAP00000043432"/>
<dbReference type="GeneID" id="507810"/>
<dbReference type="KEGG" id="bta:507810"/>
<dbReference type="CTD" id="507810"/>
<dbReference type="VEuPathDB" id="HostDB:ENSBTAG00000032509"/>
<dbReference type="eggNOG" id="ENOG502RTSD">
    <property type="taxonomic scope" value="Eukaryota"/>
</dbReference>
<dbReference type="HOGENOM" id="CLU_065650_0_0_1"/>
<dbReference type="InParanoid" id="Q2TBR5"/>
<dbReference type="OMA" id="CCGQDLT"/>
<dbReference type="OrthoDB" id="2019884at2759"/>
<dbReference type="TreeFam" id="TF325739"/>
<dbReference type="Proteomes" id="UP000009136">
    <property type="component" value="Chromosome 8"/>
</dbReference>
<dbReference type="Bgee" id="ENSBTAG00000032509">
    <property type="expression patterns" value="Expressed in trachea and 81 other cell types or tissues"/>
</dbReference>
<dbReference type="GO" id="GO:0005879">
    <property type="term" value="C:axonemal microtubule"/>
    <property type="evidence" value="ECO:0000314"/>
    <property type="project" value="UniProtKB"/>
</dbReference>
<dbReference type="GO" id="GO:0031514">
    <property type="term" value="C:motile cilium"/>
    <property type="evidence" value="ECO:0007669"/>
    <property type="project" value="UniProtKB-KW"/>
</dbReference>
<dbReference type="InterPro" id="IPR018902">
    <property type="entry name" value="CMI2A-C-like_dom"/>
</dbReference>
<dbReference type="PANTHER" id="PTHR22146">
    <property type="entry name" value="CAT EYE SYNDROME CRITICAL REGION PROTEIN 6"/>
    <property type="match status" value="1"/>
</dbReference>
<dbReference type="PANTHER" id="PTHR22146:SF8">
    <property type="entry name" value="PROTEIN FAM166B"/>
    <property type="match status" value="1"/>
</dbReference>
<dbReference type="Pfam" id="PF10629">
    <property type="entry name" value="CMI2B-like"/>
    <property type="match status" value="2"/>
</dbReference>
<organism>
    <name type="scientific">Bos taurus</name>
    <name type="common">Bovine</name>
    <dbReference type="NCBI Taxonomy" id="9913"/>
    <lineage>
        <taxon>Eukaryota</taxon>
        <taxon>Metazoa</taxon>
        <taxon>Chordata</taxon>
        <taxon>Craniata</taxon>
        <taxon>Vertebrata</taxon>
        <taxon>Euteleostomi</taxon>
        <taxon>Mammalia</taxon>
        <taxon>Eutheria</taxon>
        <taxon>Laurasiatheria</taxon>
        <taxon>Artiodactyla</taxon>
        <taxon>Ruminantia</taxon>
        <taxon>Pecora</taxon>
        <taxon>Bovidae</taxon>
        <taxon>Bovinae</taxon>
        <taxon>Bos</taxon>
    </lineage>
</organism>
<comment type="function">
    <text evidence="3">Microtubule inner protein (MIP) part of the dynein-decorated doublet microtubules (DMTs) in cilia axoneme, which is required for motile cilia beating.</text>
</comment>
<comment type="subunit">
    <text evidence="1">Microtubule inner protein component of sperm flagellar doublet microtubules.</text>
</comment>
<comment type="subcellular location">
    <subcellularLocation>
        <location evidence="3">Cytoplasm</location>
        <location evidence="3">Cytoskeleton</location>
        <location evidence="3">Cilium axoneme</location>
    </subcellularLocation>
    <subcellularLocation>
        <location evidence="1">Cytoplasm</location>
        <location evidence="1">Cytoskeleton</location>
        <location evidence="1">Flagellum axoneme</location>
    </subcellularLocation>
</comment>
<comment type="tissue specificity">
    <text evidence="3">Expressed in trachea multiciliated cells.</text>
</comment>
<comment type="similarity">
    <text evidence="4">Belongs to the CIMIP2 family.</text>
</comment>
<accession>Q2TBR5</accession>
<reference key="1">
    <citation type="submission" date="2005-11" db="EMBL/GenBank/DDBJ databases">
        <authorList>
            <consortium name="NIH - Mammalian Gene Collection (MGC) project"/>
        </authorList>
    </citation>
    <scope>NUCLEOTIDE SEQUENCE [LARGE SCALE MRNA]</scope>
    <source>
        <strain>Crossbred X Angus</strain>
        <tissue>Liver</tissue>
    </source>
</reference>
<reference evidence="5" key="2">
    <citation type="journal article" date="2021" name="Cell">
        <title>De novo identification of mammalian ciliary motility proteins using cryo-EM.</title>
        <authorList>
            <person name="Gui M."/>
            <person name="Farley H."/>
            <person name="Anujan P."/>
            <person name="Anderson J.R."/>
            <person name="Maxwell D.W."/>
            <person name="Whitchurch J.B."/>
            <person name="Botsch J.J."/>
            <person name="Qiu T."/>
            <person name="Meleppattu S."/>
            <person name="Singh S.K."/>
            <person name="Zhang Q."/>
            <person name="Thompson J."/>
            <person name="Lucas J.S."/>
            <person name="Bingle C.D."/>
            <person name="Norris D.P."/>
            <person name="Roy S."/>
            <person name="Brown A."/>
        </authorList>
    </citation>
    <scope>STRUCTURE BY ELECTRON MICROSCOPY (3.40 ANGSTROMS)</scope>
    <scope>FUNCTION</scope>
    <scope>SUBCELLULAR LOCATION</scope>
    <scope>TISSUE SPECIFICITY</scope>
</reference>